<evidence type="ECO:0000255" key="1">
    <source>
        <dbReference type="HAMAP-Rule" id="MF_00268"/>
    </source>
</evidence>
<feature type="chain" id="PRO_0000411249" description="Protein RecA">
    <location>
        <begin position="1"/>
        <end position="348"/>
    </location>
</feature>
<feature type="binding site" evidence="1">
    <location>
        <begin position="66"/>
        <end position="73"/>
    </location>
    <ligand>
        <name>ATP</name>
        <dbReference type="ChEBI" id="CHEBI:30616"/>
    </ligand>
</feature>
<gene>
    <name evidence="1" type="primary">recA</name>
    <name type="ordered locus">NMBH4476_0775</name>
    <name type="ORF">NMH_1222</name>
</gene>
<reference key="1">
    <citation type="journal article" date="2011" name="J. Bacteriol.">
        <title>Genome sequence of Neisseria meningitidis serogroup B strain H44/76.</title>
        <authorList>
            <person name="Piet J.R."/>
            <person name="Huis In 't Veld R.A."/>
            <person name="van Schaik B.D."/>
            <person name="van Kampen A.H."/>
            <person name="Baas F."/>
            <person name="van de Beek D."/>
            <person name="Pannekoek Y."/>
            <person name="van der Ende A."/>
        </authorList>
    </citation>
    <scope>NUCLEOTIDE SEQUENCE [LARGE SCALE GENOMIC DNA]</scope>
    <source>
        <strain>H44/76</strain>
    </source>
</reference>
<reference key="2">
    <citation type="journal article" date="2011" name="Proc. Natl. Acad. Sci. U.S.A.">
        <title>Neisseria meningitidis is structured in clades associated with restriction modification systems that modulate homologous recombination.</title>
        <authorList>
            <person name="Budroni S."/>
            <person name="Siena E."/>
            <person name="Hotopp J.C."/>
            <person name="Seib K.L."/>
            <person name="Serruto D."/>
            <person name="Nofroni C."/>
            <person name="Comanducci M."/>
            <person name="Riley D.R."/>
            <person name="Daugherty S.C."/>
            <person name="Angiuoli S.V."/>
            <person name="Covacci A."/>
            <person name="Pizza M."/>
            <person name="Rappuoli R."/>
            <person name="Moxon E.R."/>
            <person name="Tettelin H."/>
            <person name="Medini D."/>
        </authorList>
    </citation>
    <scope>NUCLEOTIDE SEQUENCE [LARGE SCALE GENOMIC DNA]</scope>
    <source>
        <strain>H44/76</strain>
    </source>
</reference>
<reference key="3">
    <citation type="journal article" date="1992" name="Mol. Microbiol.">
        <title>Sequence diversity within the argF, fbp and recA genes of natural isolates of Neisseria meningitidis: interspecies recombination within the argF gene.</title>
        <authorList>
            <person name="Zhou J."/>
            <person name="Spratt B.G."/>
        </authorList>
    </citation>
    <scope>NUCLEOTIDE SEQUENCE [GENOMIC DNA] OF 24-297</scope>
    <source>
        <strain>H44/76</strain>
    </source>
</reference>
<proteinExistence type="inferred from homology"/>
<comment type="function">
    <text evidence="1">Can catalyze the hydrolysis of ATP in the presence of single-stranded DNA, the ATP-dependent uptake of single-stranded DNA by duplex DNA, and the ATP-dependent hybridization of homologous single-stranded DNAs. It interacts with LexA causing its activation and leading to its autocatalytic cleavage.</text>
</comment>
<comment type="subcellular location">
    <subcellularLocation>
        <location evidence="1">Cytoplasm</location>
    </subcellularLocation>
</comment>
<comment type="similarity">
    <text evidence="1">Belongs to the RecA family.</text>
</comment>
<sequence>MSDDKSKALAAALAQIEKSFGKGAIMKMDGSQQEENLEVISTGSLGLDLALGVGGLPRGRIVEIFGPESSGKTTLCLEAVAQCQKNGGVCAFVDAEHAFDPVYARKLGVKVEELYLSQPDTGEQALEICDTLVRSGGIDMVVVDSVAALVPKAEIEGDMGDSHVGLQARLMSQALRKLTGHIKKTNTLVVFINQIRMKIGVMFGSPETTTGGNALKFYSSVRLDIRRTGSIKKGEEVLGNETRVKVIKNKVAPPFRQAEFDILYGEGISWEGELIDIGVKNDIINKSGAWYSYNGAKIGQGKDNVRVWLKENPEIADEIDAKIRALNGIEMHITEGTQDETDGERPEE</sequence>
<name>RECA_NEIMH</name>
<protein>
    <recommendedName>
        <fullName evidence="1">Protein RecA</fullName>
    </recommendedName>
    <alternativeName>
        <fullName evidence="1">Recombinase A</fullName>
    </alternativeName>
</protein>
<dbReference type="EMBL" id="AEQZ01000029">
    <property type="protein sequence ID" value="EFV63540.1"/>
    <property type="molecule type" value="Genomic_DNA"/>
</dbReference>
<dbReference type="EMBL" id="CP002420">
    <property type="protein sequence ID" value="ADY95394.1"/>
    <property type="molecule type" value="Genomic_DNA"/>
</dbReference>
<dbReference type="EMBL" id="X64849">
    <property type="protein sequence ID" value="CAA46061.1"/>
    <property type="molecule type" value="Genomic_DNA"/>
</dbReference>
<dbReference type="PIR" id="S24745">
    <property type="entry name" value="S24745"/>
</dbReference>
<dbReference type="RefSeq" id="WP_002216923.1">
    <property type="nucleotide sequence ID" value="NZ_AEQZ01000029.1"/>
</dbReference>
<dbReference type="SMR" id="E6MXY4"/>
<dbReference type="KEGG" id="nmh:NMBH4476_0775"/>
<dbReference type="PATRIC" id="fig|909420.3.peg.1065"/>
<dbReference type="HOGENOM" id="CLU_040469_3_2_4"/>
<dbReference type="Proteomes" id="UP000032707">
    <property type="component" value="Unassembled WGS sequence"/>
</dbReference>
<dbReference type="GO" id="GO:0005829">
    <property type="term" value="C:cytosol"/>
    <property type="evidence" value="ECO:0007669"/>
    <property type="project" value="TreeGrafter"/>
</dbReference>
<dbReference type="GO" id="GO:0005524">
    <property type="term" value="F:ATP binding"/>
    <property type="evidence" value="ECO:0007669"/>
    <property type="project" value="UniProtKB-UniRule"/>
</dbReference>
<dbReference type="GO" id="GO:0016887">
    <property type="term" value="F:ATP hydrolysis activity"/>
    <property type="evidence" value="ECO:0007669"/>
    <property type="project" value="InterPro"/>
</dbReference>
<dbReference type="GO" id="GO:0140664">
    <property type="term" value="F:ATP-dependent DNA damage sensor activity"/>
    <property type="evidence" value="ECO:0007669"/>
    <property type="project" value="InterPro"/>
</dbReference>
<dbReference type="GO" id="GO:0003684">
    <property type="term" value="F:damaged DNA binding"/>
    <property type="evidence" value="ECO:0007669"/>
    <property type="project" value="UniProtKB-UniRule"/>
</dbReference>
<dbReference type="GO" id="GO:0003697">
    <property type="term" value="F:single-stranded DNA binding"/>
    <property type="evidence" value="ECO:0007669"/>
    <property type="project" value="UniProtKB-UniRule"/>
</dbReference>
<dbReference type="GO" id="GO:0006310">
    <property type="term" value="P:DNA recombination"/>
    <property type="evidence" value="ECO:0007669"/>
    <property type="project" value="UniProtKB-UniRule"/>
</dbReference>
<dbReference type="GO" id="GO:0006281">
    <property type="term" value="P:DNA repair"/>
    <property type="evidence" value="ECO:0007669"/>
    <property type="project" value="UniProtKB-UniRule"/>
</dbReference>
<dbReference type="GO" id="GO:0009432">
    <property type="term" value="P:SOS response"/>
    <property type="evidence" value="ECO:0007669"/>
    <property type="project" value="UniProtKB-UniRule"/>
</dbReference>
<dbReference type="CDD" id="cd00983">
    <property type="entry name" value="RecA"/>
    <property type="match status" value="1"/>
</dbReference>
<dbReference type="FunFam" id="3.40.50.300:FF:000087">
    <property type="entry name" value="Recombinase RecA"/>
    <property type="match status" value="1"/>
</dbReference>
<dbReference type="Gene3D" id="3.40.50.300">
    <property type="entry name" value="P-loop containing nucleotide triphosphate hydrolases"/>
    <property type="match status" value="1"/>
</dbReference>
<dbReference type="HAMAP" id="MF_00268">
    <property type="entry name" value="RecA"/>
    <property type="match status" value="1"/>
</dbReference>
<dbReference type="InterPro" id="IPR003593">
    <property type="entry name" value="AAA+_ATPase"/>
</dbReference>
<dbReference type="InterPro" id="IPR013765">
    <property type="entry name" value="DNA_recomb/repair_RecA"/>
</dbReference>
<dbReference type="InterPro" id="IPR020584">
    <property type="entry name" value="DNA_recomb/repair_RecA_CS"/>
</dbReference>
<dbReference type="InterPro" id="IPR027417">
    <property type="entry name" value="P-loop_NTPase"/>
</dbReference>
<dbReference type="InterPro" id="IPR049261">
    <property type="entry name" value="RecA-like_C"/>
</dbReference>
<dbReference type="InterPro" id="IPR049428">
    <property type="entry name" value="RecA-like_N"/>
</dbReference>
<dbReference type="InterPro" id="IPR020588">
    <property type="entry name" value="RecA_ATP-bd"/>
</dbReference>
<dbReference type="InterPro" id="IPR023400">
    <property type="entry name" value="RecA_C_sf"/>
</dbReference>
<dbReference type="InterPro" id="IPR020587">
    <property type="entry name" value="RecA_monomer-monomer_interface"/>
</dbReference>
<dbReference type="NCBIfam" id="TIGR02012">
    <property type="entry name" value="tigrfam_recA"/>
    <property type="match status" value="1"/>
</dbReference>
<dbReference type="PANTHER" id="PTHR45900:SF1">
    <property type="entry name" value="MITOCHONDRIAL DNA REPAIR PROTEIN RECA HOMOLOG-RELATED"/>
    <property type="match status" value="1"/>
</dbReference>
<dbReference type="PANTHER" id="PTHR45900">
    <property type="entry name" value="RECA"/>
    <property type="match status" value="1"/>
</dbReference>
<dbReference type="Pfam" id="PF00154">
    <property type="entry name" value="RecA"/>
    <property type="match status" value="1"/>
</dbReference>
<dbReference type="Pfam" id="PF21096">
    <property type="entry name" value="RecA_C"/>
    <property type="match status" value="1"/>
</dbReference>
<dbReference type="PRINTS" id="PR00142">
    <property type="entry name" value="RECA"/>
</dbReference>
<dbReference type="SMART" id="SM00382">
    <property type="entry name" value="AAA"/>
    <property type="match status" value="1"/>
</dbReference>
<dbReference type="SUPFAM" id="SSF52540">
    <property type="entry name" value="P-loop containing nucleoside triphosphate hydrolases"/>
    <property type="match status" value="1"/>
</dbReference>
<dbReference type="SUPFAM" id="SSF54752">
    <property type="entry name" value="RecA protein, C-terminal domain"/>
    <property type="match status" value="1"/>
</dbReference>
<dbReference type="PROSITE" id="PS00321">
    <property type="entry name" value="RECA_1"/>
    <property type="match status" value="1"/>
</dbReference>
<dbReference type="PROSITE" id="PS50162">
    <property type="entry name" value="RECA_2"/>
    <property type="match status" value="1"/>
</dbReference>
<dbReference type="PROSITE" id="PS50163">
    <property type="entry name" value="RECA_3"/>
    <property type="match status" value="1"/>
</dbReference>
<accession>E6MXY4</accession>
<accession>P49984</accession>
<accession>P56988</accession>
<organism>
    <name type="scientific">Neisseria meningitidis serogroup B / serotype 15 (strain H44/76)</name>
    <dbReference type="NCBI Taxonomy" id="909420"/>
    <lineage>
        <taxon>Bacteria</taxon>
        <taxon>Pseudomonadati</taxon>
        <taxon>Pseudomonadota</taxon>
        <taxon>Betaproteobacteria</taxon>
        <taxon>Neisseriales</taxon>
        <taxon>Neisseriaceae</taxon>
        <taxon>Neisseria</taxon>
    </lineage>
</organism>
<keyword id="KW-0067">ATP-binding</keyword>
<keyword id="KW-0963">Cytoplasm</keyword>
<keyword id="KW-0227">DNA damage</keyword>
<keyword id="KW-0233">DNA recombination</keyword>
<keyword id="KW-0234">DNA repair</keyword>
<keyword id="KW-0238">DNA-binding</keyword>
<keyword id="KW-0547">Nucleotide-binding</keyword>
<keyword id="KW-0742">SOS response</keyword>